<evidence type="ECO:0000250" key="1"/>
<evidence type="ECO:0000255" key="2">
    <source>
        <dbReference type="PROSITE-ProRule" id="PRU01023"/>
    </source>
</evidence>
<evidence type="ECO:0000305" key="3"/>
<keyword id="KW-0963">Cytoplasm</keyword>
<keyword id="KW-0489">Methyltransferase</keyword>
<keyword id="KW-0690">Ribosome biogenesis</keyword>
<keyword id="KW-0694">RNA-binding</keyword>
<keyword id="KW-0698">rRNA processing</keyword>
<keyword id="KW-0949">S-adenosyl-L-methionine</keyword>
<keyword id="KW-0808">Transferase</keyword>
<feature type="chain" id="PRO_0000211809" description="Ribosomal RNA small subunit methyltransferase B">
    <location>
        <begin position="1"/>
        <end position="426"/>
    </location>
</feature>
<feature type="active site" description="Nucleophile" evidence="2">
    <location>
        <position position="372"/>
    </location>
</feature>
<feature type="binding site" evidence="2">
    <location>
        <begin position="251"/>
        <end position="257"/>
    </location>
    <ligand>
        <name>S-adenosyl-L-methionine</name>
        <dbReference type="ChEBI" id="CHEBI:59789"/>
    </ligand>
</feature>
<feature type="binding site" evidence="2">
    <location>
        <position position="274"/>
    </location>
    <ligand>
        <name>S-adenosyl-L-methionine</name>
        <dbReference type="ChEBI" id="CHEBI:59789"/>
    </ligand>
</feature>
<feature type="binding site" evidence="2">
    <location>
        <position position="300"/>
    </location>
    <ligand>
        <name>S-adenosyl-L-methionine</name>
        <dbReference type="ChEBI" id="CHEBI:59789"/>
    </ligand>
</feature>
<feature type="binding site" evidence="2">
    <location>
        <position position="319"/>
    </location>
    <ligand>
        <name>S-adenosyl-L-methionine</name>
        <dbReference type="ChEBI" id="CHEBI:59789"/>
    </ligand>
</feature>
<name>RSMB_VIBVY</name>
<gene>
    <name type="primary">rsmB</name>
    <name type="synonym">rrmB</name>
    <name type="ordered locus">VV3227</name>
</gene>
<accession>Q7MGK4</accession>
<protein>
    <recommendedName>
        <fullName>Ribosomal RNA small subunit methyltransferase B</fullName>
        <ecNumber>2.1.1.176</ecNumber>
    </recommendedName>
    <alternativeName>
        <fullName>16S rRNA m5C967 methyltransferase</fullName>
    </alternativeName>
    <alternativeName>
        <fullName>rRNA (cytosine-C(5)-)-methyltransferase RsmB</fullName>
    </alternativeName>
</protein>
<organism>
    <name type="scientific">Vibrio vulnificus (strain YJ016)</name>
    <dbReference type="NCBI Taxonomy" id="196600"/>
    <lineage>
        <taxon>Bacteria</taxon>
        <taxon>Pseudomonadati</taxon>
        <taxon>Pseudomonadota</taxon>
        <taxon>Gammaproteobacteria</taxon>
        <taxon>Vibrionales</taxon>
        <taxon>Vibrionaceae</taxon>
        <taxon>Vibrio</taxon>
    </lineage>
</organism>
<comment type="function">
    <text evidence="1">Specifically methylates the cytosine at position 967 (m5C967) of 16S rRNA.</text>
</comment>
<comment type="catalytic activity">
    <reaction>
        <text>cytidine(967) in 16S rRNA + S-adenosyl-L-methionine = 5-methylcytidine(967) in 16S rRNA + S-adenosyl-L-homocysteine + H(+)</text>
        <dbReference type="Rhea" id="RHEA:42748"/>
        <dbReference type="Rhea" id="RHEA-COMP:10219"/>
        <dbReference type="Rhea" id="RHEA-COMP:10220"/>
        <dbReference type="ChEBI" id="CHEBI:15378"/>
        <dbReference type="ChEBI" id="CHEBI:57856"/>
        <dbReference type="ChEBI" id="CHEBI:59789"/>
        <dbReference type="ChEBI" id="CHEBI:74483"/>
        <dbReference type="ChEBI" id="CHEBI:82748"/>
        <dbReference type="EC" id="2.1.1.176"/>
    </reaction>
</comment>
<comment type="subcellular location">
    <subcellularLocation>
        <location evidence="3">Cytoplasm</location>
    </subcellularLocation>
</comment>
<comment type="similarity">
    <text evidence="2">Belongs to the class I-like SAM-binding methyltransferase superfamily. RsmB/NOP family.</text>
</comment>
<proteinExistence type="inferred from homology"/>
<reference key="1">
    <citation type="journal article" date="2003" name="Genome Res.">
        <title>Comparative genome analysis of Vibrio vulnificus, a marine pathogen.</title>
        <authorList>
            <person name="Chen C.-Y."/>
            <person name="Wu K.-M."/>
            <person name="Chang Y.-C."/>
            <person name="Chang C.-H."/>
            <person name="Tsai H.-C."/>
            <person name="Liao T.-L."/>
            <person name="Liu Y.-M."/>
            <person name="Chen H.-J."/>
            <person name="Shen A.B.-T."/>
            <person name="Li J.-C."/>
            <person name="Su T.-L."/>
            <person name="Shao C.-P."/>
            <person name="Lee C.-T."/>
            <person name="Hor L.-I."/>
            <person name="Tsai S.-F."/>
        </authorList>
    </citation>
    <scope>NUCLEOTIDE SEQUENCE [LARGE SCALE GENOMIC DNA]</scope>
    <source>
        <strain>YJ016</strain>
    </source>
</reference>
<sequence length="426" mass="47688">MNVRAAAANVLYQVVDRGNSLSTALPEAQQSIRPRDHALLQEICYGALRYLPRLESIAGKLMDKPLKGKQRVFHHLILVGLYQLGHMRIPAHAAVGETVEGAQALKGPRLRGLINAVLRNYQREQQALDEFSVSHNAGKYVHPSWLLKILQDAYPEQWQTIVEANNNKAPMWLRVNHAHHDRDEYLQLLKNANIDSTLHSEAMDAIKLAAPCDVHSLPGFEQGWVSVQDAAAQLSFNYLQPKDGELILDCCAAPGGKTAHILERVSAREVVALDCDEQRLKRVTENLKRLNLQAKVICGDARNPEQWWQGEQFDRILLDAPCSATGVIRRHPDIKWLRRAEDITALAQLQSEIFDAMWAQLKPGGTLVYATCSITPMENVEQVKAFLARTPAAQLVGSERENPGRQILPGEEDMDGFYYAVLVKQA</sequence>
<dbReference type="EC" id="2.1.1.176"/>
<dbReference type="EMBL" id="BA000037">
    <property type="protein sequence ID" value="BAC95991.1"/>
    <property type="molecule type" value="Genomic_DNA"/>
</dbReference>
<dbReference type="RefSeq" id="WP_011151424.1">
    <property type="nucleotide sequence ID" value="NC_005139.1"/>
</dbReference>
<dbReference type="SMR" id="Q7MGK4"/>
<dbReference type="STRING" id="672.VV93_v1c29490"/>
<dbReference type="KEGG" id="vvy:VV3227"/>
<dbReference type="PATRIC" id="fig|196600.6.peg.3193"/>
<dbReference type="eggNOG" id="COG0144">
    <property type="taxonomic scope" value="Bacteria"/>
</dbReference>
<dbReference type="eggNOG" id="COG0781">
    <property type="taxonomic scope" value="Bacteria"/>
</dbReference>
<dbReference type="HOGENOM" id="CLU_005316_0_4_6"/>
<dbReference type="Proteomes" id="UP000002675">
    <property type="component" value="Chromosome I"/>
</dbReference>
<dbReference type="GO" id="GO:0005829">
    <property type="term" value="C:cytosol"/>
    <property type="evidence" value="ECO:0007669"/>
    <property type="project" value="TreeGrafter"/>
</dbReference>
<dbReference type="GO" id="GO:0003723">
    <property type="term" value="F:RNA binding"/>
    <property type="evidence" value="ECO:0007669"/>
    <property type="project" value="UniProtKB-KW"/>
</dbReference>
<dbReference type="GO" id="GO:0009383">
    <property type="term" value="F:rRNA (cytosine-C5-)-methyltransferase activity"/>
    <property type="evidence" value="ECO:0007669"/>
    <property type="project" value="TreeGrafter"/>
</dbReference>
<dbReference type="GO" id="GO:0006355">
    <property type="term" value="P:regulation of DNA-templated transcription"/>
    <property type="evidence" value="ECO:0007669"/>
    <property type="project" value="InterPro"/>
</dbReference>
<dbReference type="GO" id="GO:0070475">
    <property type="term" value="P:rRNA base methylation"/>
    <property type="evidence" value="ECO:0007669"/>
    <property type="project" value="TreeGrafter"/>
</dbReference>
<dbReference type="CDD" id="cd02440">
    <property type="entry name" value="AdoMet_MTases"/>
    <property type="match status" value="1"/>
</dbReference>
<dbReference type="CDD" id="cd00620">
    <property type="entry name" value="Methyltransferase_Sun"/>
    <property type="match status" value="1"/>
</dbReference>
<dbReference type="FunFam" id="1.10.940.10:FF:000002">
    <property type="entry name" value="Ribosomal RNA small subunit methyltransferase B"/>
    <property type="match status" value="1"/>
</dbReference>
<dbReference type="FunFam" id="3.30.70.1170:FF:000002">
    <property type="entry name" value="Ribosomal RNA small subunit methyltransferase B"/>
    <property type="match status" value="1"/>
</dbReference>
<dbReference type="FunFam" id="3.40.50.150:FF:000022">
    <property type="entry name" value="Ribosomal RNA small subunit methyltransferase B"/>
    <property type="match status" value="1"/>
</dbReference>
<dbReference type="Gene3D" id="1.10.287.730">
    <property type="entry name" value="Helix hairpin bin"/>
    <property type="match status" value="1"/>
</dbReference>
<dbReference type="Gene3D" id="1.10.940.10">
    <property type="entry name" value="NusB-like"/>
    <property type="match status" value="1"/>
</dbReference>
<dbReference type="Gene3D" id="3.30.70.1170">
    <property type="entry name" value="Sun protein, domain 3"/>
    <property type="match status" value="1"/>
</dbReference>
<dbReference type="Gene3D" id="3.40.50.150">
    <property type="entry name" value="Vaccinia Virus protein VP39"/>
    <property type="match status" value="1"/>
</dbReference>
<dbReference type="InterPro" id="IPR049560">
    <property type="entry name" value="MeTrfase_RsmB-F_NOP2_cat"/>
</dbReference>
<dbReference type="InterPro" id="IPR001678">
    <property type="entry name" value="MeTrfase_RsmB-F_NOP2_dom"/>
</dbReference>
<dbReference type="InterPro" id="IPR035926">
    <property type="entry name" value="NusB-like_sf"/>
</dbReference>
<dbReference type="InterPro" id="IPR006027">
    <property type="entry name" value="NusB_RsmB_TIM44"/>
</dbReference>
<dbReference type="InterPro" id="IPR023267">
    <property type="entry name" value="RCMT"/>
</dbReference>
<dbReference type="InterPro" id="IPR004573">
    <property type="entry name" value="rRNA_ssu_MeTfrase_B"/>
</dbReference>
<dbReference type="InterPro" id="IPR054728">
    <property type="entry name" value="RsmB-like_ferredoxin"/>
</dbReference>
<dbReference type="InterPro" id="IPR048019">
    <property type="entry name" value="RsmB-like_N"/>
</dbReference>
<dbReference type="InterPro" id="IPR018314">
    <property type="entry name" value="RsmB/NOL1/NOP2-like_CS"/>
</dbReference>
<dbReference type="InterPro" id="IPR029063">
    <property type="entry name" value="SAM-dependent_MTases_sf"/>
</dbReference>
<dbReference type="NCBIfam" id="NF008149">
    <property type="entry name" value="PRK10901.1"/>
    <property type="match status" value="1"/>
</dbReference>
<dbReference type="NCBIfam" id="NF011494">
    <property type="entry name" value="PRK14902.1"/>
    <property type="match status" value="1"/>
</dbReference>
<dbReference type="NCBIfam" id="TIGR00563">
    <property type="entry name" value="rsmB"/>
    <property type="match status" value="1"/>
</dbReference>
<dbReference type="PANTHER" id="PTHR22807:SF61">
    <property type="entry name" value="NOL1_NOP2_SUN FAMILY PROTEIN _ ANTITERMINATION NUSB DOMAIN-CONTAINING PROTEIN"/>
    <property type="match status" value="1"/>
</dbReference>
<dbReference type="PANTHER" id="PTHR22807">
    <property type="entry name" value="NOP2 YEAST -RELATED NOL1/NOP2/FMU SUN DOMAIN-CONTAINING"/>
    <property type="match status" value="1"/>
</dbReference>
<dbReference type="Pfam" id="PF01189">
    <property type="entry name" value="Methyltr_RsmB-F"/>
    <property type="match status" value="1"/>
</dbReference>
<dbReference type="Pfam" id="PF01029">
    <property type="entry name" value="NusB"/>
    <property type="match status" value="1"/>
</dbReference>
<dbReference type="Pfam" id="PF22458">
    <property type="entry name" value="RsmF-B_ferredox"/>
    <property type="match status" value="1"/>
</dbReference>
<dbReference type="PRINTS" id="PR02008">
    <property type="entry name" value="RCMTFAMILY"/>
</dbReference>
<dbReference type="SUPFAM" id="SSF48013">
    <property type="entry name" value="NusB-like"/>
    <property type="match status" value="1"/>
</dbReference>
<dbReference type="SUPFAM" id="SSF53335">
    <property type="entry name" value="S-adenosyl-L-methionine-dependent methyltransferases"/>
    <property type="match status" value="1"/>
</dbReference>
<dbReference type="PROSITE" id="PS01153">
    <property type="entry name" value="NOL1_NOP2_SUN"/>
    <property type="match status" value="1"/>
</dbReference>
<dbReference type="PROSITE" id="PS51686">
    <property type="entry name" value="SAM_MT_RSMB_NOP"/>
    <property type="match status" value="1"/>
</dbReference>